<comment type="function">
    <text evidence="1">Probably involved in ribonucleotide reductase function.</text>
</comment>
<comment type="similarity">
    <text evidence="2">Belongs to the NrdI family.</text>
</comment>
<dbReference type="EMBL" id="AE005174">
    <property type="protein sequence ID" value="AAG57784.1"/>
    <property type="molecule type" value="Genomic_DNA"/>
</dbReference>
<dbReference type="EMBL" id="BA000007">
    <property type="protein sequence ID" value="BAB36960.1"/>
    <property type="molecule type" value="Genomic_DNA"/>
</dbReference>
<dbReference type="PIR" id="A91071">
    <property type="entry name" value="A91071"/>
</dbReference>
<dbReference type="PIR" id="D85915">
    <property type="entry name" value="D85915"/>
</dbReference>
<dbReference type="RefSeq" id="NP_311564.1">
    <property type="nucleotide sequence ID" value="NC_002695.1"/>
</dbReference>
<dbReference type="RefSeq" id="WP_000080947.1">
    <property type="nucleotide sequence ID" value="NZ_VOAI01000003.1"/>
</dbReference>
<dbReference type="SMR" id="P0A774"/>
<dbReference type="STRING" id="155864.Z3976"/>
<dbReference type="GeneID" id="75172757"/>
<dbReference type="GeneID" id="914747"/>
<dbReference type="KEGG" id="ece:Z3976"/>
<dbReference type="KEGG" id="ecs:ECs_3537"/>
<dbReference type="PATRIC" id="fig|386585.9.peg.3691"/>
<dbReference type="eggNOG" id="COG1780">
    <property type="taxonomic scope" value="Bacteria"/>
</dbReference>
<dbReference type="HOGENOM" id="CLU_114845_0_0_6"/>
<dbReference type="OMA" id="NTHRFVG"/>
<dbReference type="Proteomes" id="UP000000558">
    <property type="component" value="Chromosome"/>
</dbReference>
<dbReference type="Proteomes" id="UP000002519">
    <property type="component" value="Chromosome"/>
</dbReference>
<dbReference type="GO" id="GO:0010181">
    <property type="term" value="F:FMN binding"/>
    <property type="evidence" value="ECO:0007669"/>
    <property type="project" value="InterPro"/>
</dbReference>
<dbReference type="GO" id="GO:0036211">
    <property type="term" value="P:protein modification process"/>
    <property type="evidence" value="ECO:0007669"/>
    <property type="project" value="InterPro"/>
</dbReference>
<dbReference type="FunFam" id="3.40.50.360:FF:000005">
    <property type="entry name" value="Protein NrdI"/>
    <property type="match status" value="1"/>
</dbReference>
<dbReference type="Gene3D" id="3.40.50.360">
    <property type="match status" value="1"/>
</dbReference>
<dbReference type="HAMAP" id="MF_00128">
    <property type="entry name" value="NrdI"/>
    <property type="match status" value="1"/>
</dbReference>
<dbReference type="InterPro" id="IPR029039">
    <property type="entry name" value="Flavoprotein-like_sf"/>
</dbReference>
<dbReference type="InterPro" id="IPR020852">
    <property type="entry name" value="RNR_Ib_NrdI_bac"/>
</dbReference>
<dbReference type="InterPro" id="IPR004465">
    <property type="entry name" value="RNR_NrdI"/>
</dbReference>
<dbReference type="NCBIfam" id="TIGR00333">
    <property type="entry name" value="nrdI"/>
    <property type="match status" value="1"/>
</dbReference>
<dbReference type="PANTHER" id="PTHR37297">
    <property type="entry name" value="PROTEIN NRDI"/>
    <property type="match status" value="1"/>
</dbReference>
<dbReference type="PANTHER" id="PTHR37297:SF1">
    <property type="entry name" value="PROTEIN NRDI"/>
    <property type="match status" value="1"/>
</dbReference>
<dbReference type="Pfam" id="PF07972">
    <property type="entry name" value="Flavodoxin_NdrI"/>
    <property type="match status" value="1"/>
</dbReference>
<dbReference type="PIRSF" id="PIRSF005087">
    <property type="entry name" value="NrdI"/>
    <property type="match status" value="1"/>
</dbReference>
<dbReference type="SUPFAM" id="SSF52218">
    <property type="entry name" value="Flavoproteins"/>
    <property type="match status" value="1"/>
</dbReference>
<keyword id="KW-1185">Reference proteome</keyword>
<feature type="chain" id="PRO_0000164315" description="Protein NrdI">
    <location>
        <begin position="1"/>
        <end position="136"/>
    </location>
</feature>
<gene>
    <name type="primary">nrdI</name>
    <name type="ordered locus">Z3976</name>
    <name type="ordered locus">ECs3537</name>
</gene>
<proteinExistence type="inferred from homology"/>
<protein>
    <recommendedName>
        <fullName>Protein NrdI</fullName>
    </recommendedName>
</protein>
<accession>P0A774</accession>
<accession>P77025</accession>
<accession>Q47415</accession>
<evidence type="ECO:0000250" key="1"/>
<evidence type="ECO:0000305" key="2"/>
<name>NRDI_ECO57</name>
<sequence length="136" mass="15340">MSQLVYFSSSSENTQRFIERLGLPAVRIPLNERERIQVDEPYILIVPSYGGGGTAGAVPRQVIRFLNDEHNRALLRGVIASGNRNFGEAYGRAGDVIARKCGVPWLYRFELMGTQSDIENVRKGVTEFWQRQPQNA</sequence>
<organism>
    <name type="scientific">Escherichia coli O157:H7</name>
    <dbReference type="NCBI Taxonomy" id="83334"/>
    <lineage>
        <taxon>Bacteria</taxon>
        <taxon>Pseudomonadati</taxon>
        <taxon>Pseudomonadota</taxon>
        <taxon>Gammaproteobacteria</taxon>
        <taxon>Enterobacterales</taxon>
        <taxon>Enterobacteriaceae</taxon>
        <taxon>Escherichia</taxon>
    </lineage>
</organism>
<reference key="1">
    <citation type="journal article" date="2001" name="Nature">
        <title>Genome sequence of enterohaemorrhagic Escherichia coli O157:H7.</title>
        <authorList>
            <person name="Perna N.T."/>
            <person name="Plunkett G. III"/>
            <person name="Burland V."/>
            <person name="Mau B."/>
            <person name="Glasner J.D."/>
            <person name="Rose D.J."/>
            <person name="Mayhew G.F."/>
            <person name="Evans P.S."/>
            <person name="Gregor J."/>
            <person name="Kirkpatrick H.A."/>
            <person name="Posfai G."/>
            <person name="Hackett J."/>
            <person name="Klink S."/>
            <person name="Boutin A."/>
            <person name="Shao Y."/>
            <person name="Miller L."/>
            <person name="Grotbeck E.J."/>
            <person name="Davis N.W."/>
            <person name="Lim A."/>
            <person name="Dimalanta E.T."/>
            <person name="Potamousis K."/>
            <person name="Apodaca J."/>
            <person name="Anantharaman T.S."/>
            <person name="Lin J."/>
            <person name="Yen G."/>
            <person name="Schwartz D.C."/>
            <person name="Welch R.A."/>
            <person name="Blattner F.R."/>
        </authorList>
    </citation>
    <scope>NUCLEOTIDE SEQUENCE [LARGE SCALE GENOMIC DNA]</scope>
    <source>
        <strain>O157:H7 / EDL933 / ATCC 700927 / EHEC</strain>
    </source>
</reference>
<reference key="2">
    <citation type="journal article" date="2001" name="DNA Res.">
        <title>Complete genome sequence of enterohemorrhagic Escherichia coli O157:H7 and genomic comparison with a laboratory strain K-12.</title>
        <authorList>
            <person name="Hayashi T."/>
            <person name="Makino K."/>
            <person name="Ohnishi M."/>
            <person name="Kurokawa K."/>
            <person name="Ishii K."/>
            <person name="Yokoyama K."/>
            <person name="Han C.-G."/>
            <person name="Ohtsubo E."/>
            <person name="Nakayama K."/>
            <person name="Murata T."/>
            <person name="Tanaka M."/>
            <person name="Tobe T."/>
            <person name="Iida T."/>
            <person name="Takami H."/>
            <person name="Honda T."/>
            <person name="Sasakawa C."/>
            <person name="Ogasawara N."/>
            <person name="Yasunaga T."/>
            <person name="Kuhara S."/>
            <person name="Shiba T."/>
            <person name="Hattori M."/>
            <person name="Shinagawa H."/>
        </authorList>
    </citation>
    <scope>NUCLEOTIDE SEQUENCE [LARGE SCALE GENOMIC DNA]</scope>
    <source>
        <strain>O157:H7 / Sakai / RIMD 0509952 / EHEC</strain>
    </source>
</reference>